<comment type="function">
    <text evidence="1">Is involved in L-lactate degradation and allows cells to grow with lactate as the sole carbon source.</text>
</comment>
<comment type="similarity">
    <text evidence="1">Belongs to the LutA/YkgE family.</text>
</comment>
<sequence length="239" mass="26192">MKVTLFVTCLVDMFETNVGKATVEVLERLGCEIEFPEAQVCCGQPAYNSGHVESAKEAMKHMIETFEDAEYIVTPSGSCATMFHEYPHVFKDDPKWAARAQKVADKTYELTQFIVDVLKVTDVGASLKGTATMHKSCHMTRMLGVKEAPGILLSNVKGLTVKELPNVQNCCGFGGTFSVKMTPISEQMVDEKVDSVMETGADYLIGADCGCLLNIGGRIERLGKKVRVMHIAEVLNSRS</sequence>
<gene>
    <name evidence="1" type="primary">lutA</name>
    <name type="ordered locus">Bcer98_1024</name>
</gene>
<evidence type="ECO:0000255" key="1">
    <source>
        <dbReference type="HAMAP-Rule" id="MF_02105"/>
    </source>
</evidence>
<proteinExistence type="inferred from homology"/>
<accession>A7GMJ2</accession>
<name>LUTA_BACCN</name>
<dbReference type="EMBL" id="CP000764">
    <property type="protein sequence ID" value="ABS21350.1"/>
    <property type="molecule type" value="Genomic_DNA"/>
</dbReference>
<dbReference type="RefSeq" id="WP_011984103.1">
    <property type="nucleotide sequence ID" value="NC_009674.1"/>
</dbReference>
<dbReference type="SMR" id="A7GMJ2"/>
<dbReference type="STRING" id="315749.Bcer98_1024"/>
<dbReference type="GeneID" id="33896383"/>
<dbReference type="KEGG" id="bcy:Bcer98_1024"/>
<dbReference type="eggNOG" id="COG0247">
    <property type="taxonomic scope" value="Bacteria"/>
</dbReference>
<dbReference type="HOGENOM" id="CLU_023081_1_0_9"/>
<dbReference type="OrthoDB" id="9770306at2"/>
<dbReference type="Proteomes" id="UP000002300">
    <property type="component" value="Chromosome"/>
</dbReference>
<dbReference type="GO" id="GO:0005829">
    <property type="term" value="C:cytosol"/>
    <property type="evidence" value="ECO:0007669"/>
    <property type="project" value="TreeGrafter"/>
</dbReference>
<dbReference type="GO" id="GO:0016491">
    <property type="term" value="F:oxidoreductase activity"/>
    <property type="evidence" value="ECO:0007669"/>
    <property type="project" value="UniProtKB-ARBA"/>
</dbReference>
<dbReference type="GO" id="GO:0006089">
    <property type="term" value="P:lactate metabolic process"/>
    <property type="evidence" value="ECO:0007669"/>
    <property type="project" value="UniProtKB-UniRule"/>
</dbReference>
<dbReference type="HAMAP" id="MF_02105">
    <property type="entry name" value="LutA"/>
    <property type="match status" value="1"/>
</dbReference>
<dbReference type="InterPro" id="IPR004017">
    <property type="entry name" value="Cys_rich_dom"/>
</dbReference>
<dbReference type="InterPro" id="IPR022822">
    <property type="entry name" value="LutA"/>
</dbReference>
<dbReference type="PANTHER" id="PTHR30296:SF0">
    <property type="entry name" value="LACTATE UTILIZATION PROTEIN A"/>
    <property type="match status" value="1"/>
</dbReference>
<dbReference type="PANTHER" id="PTHR30296">
    <property type="entry name" value="UNCHARACTERIZED PROTEIN YKGE"/>
    <property type="match status" value="1"/>
</dbReference>
<dbReference type="Pfam" id="PF02754">
    <property type="entry name" value="CCG"/>
    <property type="match status" value="2"/>
</dbReference>
<feature type="chain" id="PRO_0000384033" description="Lactate utilization protein A">
    <location>
        <begin position="1"/>
        <end position="239"/>
    </location>
</feature>
<reference key="1">
    <citation type="journal article" date="2008" name="Chem. Biol. Interact.">
        <title>Extending the Bacillus cereus group genomics to putative food-borne pathogens of different toxicity.</title>
        <authorList>
            <person name="Lapidus A."/>
            <person name="Goltsman E."/>
            <person name="Auger S."/>
            <person name="Galleron N."/>
            <person name="Segurens B."/>
            <person name="Dossat C."/>
            <person name="Land M.L."/>
            <person name="Broussolle V."/>
            <person name="Brillard J."/>
            <person name="Guinebretiere M.-H."/>
            <person name="Sanchis V."/>
            <person name="Nguen-the C."/>
            <person name="Lereclus D."/>
            <person name="Richardson P."/>
            <person name="Wincker P."/>
            <person name="Weissenbach J."/>
            <person name="Ehrlich S.D."/>
            <person name="Sorokin A."/>
        </authorList>
    </citation>
    <scope>NUCLEOTIDE SEQUENCE [LARGE SCALE GENOMIC DNA]</scope>
    <source>
        <strain>DSM 22905 / CIP 110041 / 391-98 / NVH 391-98</strain>
    </source>
</reference>
<organism>
    <name type="scientific">Bacillus cytotoxicus (strain DSM 22905 / CIP 110041 / 391-98 / NVH 391-98)</name>
    <dbReference type="NCBI Taxonomy" id="315749"/>
    <lineage>
        <taxon>Bacteria</taxon>
        <taxon>Bacillati</taxon>
        <taxon>Bacillota</taxon>
        <taxon>Bacilli</taxon>
        <taxon>Bacillales</taxon>
        <taxon>Bacillaceae</taxon>
        <taxon>Bacillus</taxon>
        <taxon>Bacillus cereus group</taxon>
    </lineage>
</organism>
<protein>
    <recommendedName>
        <fullName evidence="1">Lactate utilization protein A</fullName>
    </recommendedName>
</protein>